<reference key="1">
    <citation type="journal article" date="1999" name="J. Biol. Chem.">
        <title>The 100-kDa 2',5'-oligoadenylate synthetase catalyzing preferentially the synthesis of dimeric pppA2'p5'A molecules is composed of three homologous domains.</title>
        <authorList>
            <person name="Rebouillat D."/>
            <person name="Hovnanian A."/>
            <person name="Marie I."/>
            <person name="Hovanessian A.G."/>
        </authorList>
    </citation>
    <scope>NUCLEOTIDE SEQUENCE [MRNA]</scope>
    <scope>PARTIAL PROTEIN SEQUENCE</scope>
    <scope>FUNCTION</scope>
    <scope>CATALYTIC ACTIVITY</scope>
    <scope>COFACTOR</scope>
    <scope>SUBCELLULAR LOCATION</scope>
</reference>
<reference key="2">
    <citation type="journal article" date="2001" name="Cancer Res.">
        <title>Molecular basis of T cell-mediated recognition of pancreatic cancer cells.</title>
        <authorList>
            <person name="Ito M."/>
            <person name="Shichijo S."/>
            <person name="Tsuda N."/>
            <person name="Ochi M."/>
            <person name="Harashima N."/>
            <person name="Saito N."/>
            <person name="Itoh K."/>
        </authorList>
    </citation>
    <scope>NUCLEOTIDE SEQUENCE [MRNA]</scope>
    <scope>VARIANT LYS-18</scope>
    <source>
        <tissue>Pancreatic cancer</tissue>
    </source>
</reference>
<reference key="3">
    <citation type="journal article" date="2006" name="Nature">
        <title>The finished DNA sequence of human chromosome 12.</title>
        <authorList>
            <person name="Scherer S.E."/>
            <person name="Muzny D.M."/>
            <person name="Buhay C.J."/>
            <person name="Chen R."/>
            <person name="Cree A."/>
            <person name="Ding Y."/>
            <person name="Dugan-Rocha S."/>
            <person name="Gill R."/>
            <person name="Gunaratne P."/>
            <person name="Harris R.A."/>
            <person name="Hawes A.C."/>
            <person name="Hernandez J."/>
            <person name="Hodgson A.V."/>
            <person name="Hume J."/>
            <person name="Jackson A."/>
            <person name="Khan Z.M."/>
            <person name="Kovar-Smith C."/>
            <person name="Lewis L.R."/>
            <person name="Lozado R.J."/>
            <person name="Metzker M.L."/>
            <person name="Milosavljevic A."/>
            <person name="Miner G.R."/>
            <person name="Montgomery K.T."/>
            <person name="Morgan M.B."/>
            <person name="Nazareth L.V."/>
            <person name="Scott G."/>
            <person name="Sodergren E."/>
            <person name="Song X.-Z."/>
            <person name="Steffen D."/>
            <person name="Lovering R.C."/>
            <person name="Wheeler D.A."/>
            <person name="Worley K.C."/>
            <person name="Yuan Y."/>
            <person name="Zhang Z."/>
            <person name="Adams C.Q."/>
            <person name="Ansari-Lari M.A."/>
            <person name="Ayele M."/>
            <person name="Brown M.J."/>
            <person name="Chen G."/>
            <person name="Chen Z."/>
            <person name="Clerc-Blankenburg K.P."/>
            <person name="Davis C."/>
            <person name="Delgado O."/>
            <person name="Dinh H.H."/>
            <person name="Draper H."/>
            <person name="Gonzalez-Garay M.L."/>
            <person name="Havlak P."/>
            <person name="Jackson L.R."/>
            <person name="Jacob L.S."/>
            <person name="Kelly S.H."/>
            <person name="Li L."/>
            <person name="Li Z."/>
            <person name="Liu J."/>
            <person name="Liu W."/>
            <person name="Lu J."/>
            <person name="Maheshwari M."/>
            <person name="Nguyen B.-V."/>
            <person name="Okwuonu G.O."/>
            <person name="Pasternak S."/>
            <person name="Perez L.M."/>
            <person name="Plopper F.J.H."/>
            <person name="Santibanez J."/>
            <person name="Shen H."/>
            <person name="Tabor P.E."/>
            <person name="Verduzco D."/>
            <person name="Waldron L."/>
            <person name="Wang Q."/>
            <person name="Williams G.A."/>
            <person name="Zhang J."/>
            <person name="Zhou J."/>
            <person name="Allen C.C."/>
            <person name="Amin A.G."/>
            <person name="Anyalebechi V."/>
            <person name="Bailey M."/>
            <person name="Barbaria J.A."/>
            <person name="Bimage K.E."/>
            <person name="Bryant N.P."/>
            <person name="Burch P.E."/>
            <person name="Burkett C.E."/>
            <person name="Burrell K.L."/>
            <person name="Calderon E."/>
            <person name="Cardenas V."/>
            <person name="Carter K."/>
            <person name="Casias K."/>
            <person name="Cavazos I."/>
            <person name="Cavazos S.R."/>
            <person name="Ceasar H."/>
            <person name="Chacko J."/>
            <person name="Chan S.N."/>
            <person name="Chavez D."/>
            <person name="Christopoulos C."/>
            <person name="Chu J."/>
            <person name="Cockrell R."/>
            <person name="Cox C.D."/>
            <person name="Dang M."/>
            <person name="Dathorne S.R."/>
            <person name="David R."/>
            <person name="Davis C.M."/>
            <person name="Davy-Carroll L."/>
            <person name="Deshazo D.R."/>
            <person name="Donlin J.E."/>
            <person name="D'Souza L."/>
            <person name="Eaves K.A."/>
            <person name="Egan A."/>
            <person name="Emery-Cohen A.J."/>
            <person name="Escotto M."/>
            <person name="Flagg N."/>
            <person name="Forbes L.D."/>
            <person name="Gabisi A.M."/>
            <person name="Garza M."/>
            <person name="Hamilton C."/>
            <person name="Henderson N."/>
            <person name="Hernandez O."/>
            <person name="Hines S."/>
            <person name="Hogues M.E."/>
            <person name="Huang M."/>
            <person name="Idlebird D.G."/>
            <person name="Johnson R."/>
            <person name="Jolivet A."/>
            <person name="Jones S."/>
            <person name="Kagan R."/>
            <person name="King L.M."/>
            <person name="Leal B."/>
            <person name="Lebow H."/>
            <person name="Lee S."/>
            <person name="LeVan J.M."/>
            <person name="Lewis L.C."/>
            <person name="London P."/>
            <person name="Lorensuhewa L.M."/>
            <person name="Loulseged H."/>
            <person name="Lovett D.A."/>
            <person name="Lucier A."/>
            <person name="Lucier R.L."/>
            <person name="Ma J."/>
            <person name="Madu R.C."/>
            <person name="Mapua P."/>
            <person name="Martindale A.D."/>
            <person name="Martinez E."/>
            <person name="Massey E."/>
            <person name="Mawhiney S."/>
            <person name="Meador M.G."/>
            <person name="Mendez S."/>
            <person name="Mercado C."/>
            <person name="Mercado I.C."/>
            <person name="Merritt C.E."/>
            <person name="Miner Z.L."/>
            <person name="Minja E."/>
            <person name="Mitchell T."/>
            <person name="Mohabbat F."/>
            <person name="Mohabbat K."/>
            <person name="Montgomery B."/>
            <person name="Moore N."/>
            <person name="Morris S."/>
            <person name="Munidasa M."/>
            <person name="Ngo R.N."/>
            <person name="Nguyen N.B."/>
            <person name="Nickerson E."/>
            <person name="Nwaokelemeh O.O."/>
            <person name="Nwokenkwo S."/>
            <person name="Obregon M."/>
            <person name="Oguh M."/>
            <person name="Oragunye N."/>
            <person name="Oviedo R.J."/>
            <person name="Parish B.J."/>
            <person name="Parker D.N."/>
            <person name="Parrish J."/>
            <person name="Parks K.L."/>
            <person name="Paul H.A."/>
            <person name="Payton B.A."/>
            <person name="Perez A."/>
            <person name="Perrin W."/>
            <person name="Pickens A."/>
            <person name="Primus E.L."/>
            <person name="Pu L.-L."/>
            <person name="Puazo M."/>
            <person name="Quiles M.M."/>
            <person name="Quiroz J.B."/>
            <person name="Rabata D."/>
            <person name="Reeves K."/>
            <person name="Ruiz S.J."/>
            <person name="Shao H."/>
            <person name="Sisson I."/>
            <person name="Sonaike T."/>
            <person name="Sorelle R.P."/>
            <person name="Sutton A.E."/>
            <person name="Svatek A.F."/>
            <person name="Svetz L.A."/>
            <person name="Tamerisa K.S."/>
            <person name="Taylor T.R."/>
            <person name="Teague B."/>
            <person name="Thomas N."/>
            <person name="Thorn R.D."/>
            <person name="Trejos Z.Y."/>
            <person name="Trevino B.K."/>
            <person name="Ukegbu O.N."/>
            <person name="Urban J.B."/>
            <person name="Vasquez L.I."/>
            <person name="Vera V.A."/>
            <person name="Villasana D.M."/>
            <person name="Wang L."/>
            <person name="Ward-Moore S."/>
            <person name="Warren J.T."/>
            <person name="Wei X."/>
            <person name="White F."/>
            <person name="Williamson A.L."/>
            <person name="Wleczyk R."/>
            <person name="Wooden H.S."/>
            <person name="Wooden S.H."/>
            <person name="Yen J."/>
            <person name="Yoon L."/>
            <person name="Yoon V."/>
            <person name="Zorrilla S.E."/>
            <person name="Nelson D."/>
            <person name="Kucherlapati R."/>
            <person name="Weinstock G."/>
            <person name="Gibbs R.A."/>
        </authorList>
    </citation>
    <scope>NUCLEOTIDE SEQUENCE [LARGE SCALE GENOMIC DNA]</scope>
</reference>
<reference key="4">
    <citation type="journal article" date="2004" name="Genome Res.">
        <title>The status, quality, and expansion of the NIH full-length cDNA project: the Mammalian Gene Collection (MGC).</title>
        <authorList>
            <consortium name="The MGC Project Team"/>
        </authorList>
    </citation>
    <scope>NUCLEOTIDE SEQUENCE [LARGE SCALE MRNA]</scope>
    <scope>VARIANT ARG-381</scope>
    <source>
        <tissue>Brain</tissue>
    </source>
</reference>
<reference key="5">
    <citation type="journal article" date="2000" name="Genomics">
        <title>Characterization of the gene encoding the 100-kDa form of human 2', 5'oligoadenylate synthetase.</title>
        <authorList>
            <person name="Rebouillat D."/>
            <person name="Hovnanian A."/>
            <person name="David G."/>
            <person name="Hovanessian A.G."/>
            <person name="Williams B.R."/>
        </authorList>
    </citation>
    <scope>NUCLEOTIDE SEQUENCE [GENOMIC DNA] OF 1-59</scope>
    <source>
        <tissue>Monocyte</tissue>
    </source>
</reference>
<reference key="6">
    <citation type="submission" date="2009-06" db="UniProtKB">
        <authorList>
            <person name="Bienvenut W.V."/>
            <person name="Gao M."/>
            <person name="Leug H."/>
        </authorList>
    </citation>
    <scope>PROTEIN SEQUENCE OF 1-17; 118-132; 244-253 AND 371-378</scope>
    <scope>ACETYLATION AT MET-1</scope>
    <scope>IDENTIFICATION BY MASS SPECTROMETRY</scope>
    <source>
        <tissue>Prostatic carcinoma</tissue>
    </source>
</reference>
<reference key="7">
    <citation type="journal article" date="2007" name="Biochimie">
        <title>The human 2'-5'oligoadenylate synthetase family: unique interferon-inducible enzymes catalyzing 2'-5' instead of 3'-5' phosphodiester bond formation.</title>
        <authorList>
            <person name="Hovanessian A.G."/>
            <person name="Justesen J."/>
        </authorList>
    </citation>
    <scope>REVIEW ON FUNCTION</scope>
</reference>
<reference key="8">
    <citation type="journal article" date="2009" name="J. Immunol.">
        <title>Distinct antiviral roles for human 2',5'-oligoadenylate synthetase family members against dengue virus infection.</title>
        <authorList>
            <person name="Lin R.J."/>
            <person name="Yu H.P."/>
            <person name="Chang B.L."/>
            <person name="Tang W.C."/>
            <person name="Liao C.L."/>
            <person name="Lin Y.L."/>
        </authorList>
    </citation>
    <scope>FUNCTION</scope>
    <scope>SUBCELLULAR LOCATION</scope>
</reference>
<reference key="9">
    <citation type="journal article" date="2009" name="J. Mol. Evol.">
        <title>Evolution of the 2'-5'-oligoadenylate synthetase family in eukaryotes and bacteria.</title>
        <authorList>
            <person name="Kjaer K.H."/>
            <person name="Poulsen J.B."/>
            <person name="Reintamm T."/>
            <person name="Saby E."/>
            <person name="Martensen P.M."/>
            <person name="Kelve M."/>
            <person name="Justesen J."/>
        </authorList>
    </citation>
    <scope>REVIEW</scope>
</reference>
<reference key="10">
    <citation type="journal article" date="2009" name="Virology">
        <title>The large form of human 2',5'-Oligoadenylate Synthetase (OAS3) exerts antiviral effect against Chikungunya virus.</title>
        <authorList>
            <person name="Brehin A.C."/>
            <person name="Casademont I."/>
            <person name="Frenkiel M.P."/>
            <person name="Julier C."/>
            <person name="Sakuntabhai A."/>
            <person name="Despres P."/>
        </authorList>
    </citation>
    <scope>FUNCTION</scope>
</reference>
<reference key="11">
    <citation type="journal article" date="2011" name="BMC Syst. Biol.">
        <title>Initial characterization of the human central proteome.</title>
        <authorList>
            <person name="Burkard T.R."/>
            <person name="Planyavsky M."/>
            <person name="Kaupe I."/>
            <person name="Breitwieser F.P."/>
            <person name="Buerckstuemmer T."/>
            <person name="Bennett K.L."/>
            <person name="Superti-Furga G."/>
            <person name="Colinge J."/>
        </authorList>
    </citation>
    <scope>IDENTIFICATION BY MASS SPECTROMETRY [LARGE SCALE ANALYSIS]</scope>
</reference>
<reference key="12">
    <citation type="journal article" date="2011" name="J. Interferon Cytokine Res.">
        <title>The oligoadenylate synthetase family: an ancient protein family with multiple antiviral activities.</title>
        <authorList>
            <person name="Kristiansen H."/>
            <person name="Gad H.H."/>
            <person name="Eskildsen-Larsen S."/>
            <person name="Despres P."/>
            <person name="Hartmann R."/>
        </authorList>
    </citation>
    <scope>REVIEW ON FUNCTION</scope>
</reference>
<reference key="13">
    <citation type="journal article" date="2012" name="Proc. Natl. Acad. Sci. U.S.A.">
        <title>N-terminal acetylome analyses and functional insights of the N-terminal acetyltransferase NatB.</title>
        <authorList>
            <person name="Van Damme P."/>
            <person name="Lasa M."/>
            <person name="Polevoda B."/>
            <person name="Gazquez C."/>
            <person name="Elosegui-Artola A."/>
            <person name="Kim D.S."/>
            <person name="De Juan-Pardo E."/>
            <person name="Demeyer K."/>
            <person name="Hole K."/>
            <person name="Larrea E."/>
            <person name="Timmerman E."/>
            <person name="Prieto J."/>
            <person name="Arnesen T."/>
            <person name="Sherman F."/>
            <person name="Gevaert K."/>
            <person name="Aldabe R."/>
        </authorList>
    </citation>
    <scope>ACETYLATION [LARGE SCALE ANALYSIS] AT MET-1</scope>
    <scope>IDENTIFICATION BY MASS SPECTROMETRY [LARGE SCALE ANALYSIS]</scope>
</reference>
<reference key="14">
    <citation type="journal article" date="2013" name="J. Proteome Res.">
        <title>Toward a comprehensive characterization of a human cancer cell phosphoproteome.</title>
        <authorList>
            <person name="Zhou H."/>
            <person name="Di Palma S."/>
            <person name="Preisinger C."/>
            <person name="Peng M."/>
            <person name="Polat A.N."/>
            <person name="Heck A.J."/>
            <person name="Mohammed S."/>
        </authorList>
    </citation>
    <scope>PHOSPHORYLATION [LARGE SCALE ANALYSIS] AT THR-365</scope>
    <scope>IDENTIFICATION BY MASS SPECTROMETRY [LARGE SCALE ANALYSIS]</scope>
    <source>
        <tissue>Cervix carcinoma</tissue>
    </source>
</reference>
<reference key="15">
    <citation type="journal article" date="2015" name="Proc. Natl. Acad. Sci. U.S.A.">
        <title>Structural mechanism of sensing long dsRNA via a noncatalytic domain in human oligoadenylate synthetase 3.</title>
        <authorList>
            <person name="Donovan J."/>
            <person name="Whitney G."/>
            <person name="Rath S."/>
            <person name="Korennykh A."/>
        </authorList>
    </citation>
    <scope>X-RAY CRYSTALLOGRAPHY (2.00 ANGSTROMS) OF 1-371 IN COMPLEX WITH DSRNA</scope>
    <scope>CATALYTIC ACTIVITY</scope>
    <scope>SUBUNIT</scope>
    <scope>DOMAIN</scope>
    <scope>MUTAGENESIS OF ARG-30; ARG-41; GLU-76; SER-145 AND 816-ASP--ASP-818</scope>
</reference>
<protein>
    <recommendedName>
        <fullName>2'-5'-oligoadenylate synthase 3</fullName>
        <shortName>(2-5')oligo(A) synthase 3</shortName>
        <shortName>2-5A synthase 3</shortName>
        <ecNumber evidence="7 8">2.7.7.84</ecNumber>
    </recommendedName>
    <alternativeName>
        <fullName>p100 OAS</fullName>
        <shortName>p100OAS</shortName>
    </alternativeName>
</protein>
<comment type="function">
    <text evidence="5 6 8">Interferon-induced, dsRNA-activated antiviral enzyme which plays a critical role in cellular innate antiviral response. In addition, it may also play a role in other cellular processes such as apoptosis, cell growth, differentiation and gene regulation. Synthesizes preferentially dimers of 2'-5'-oligoadenylates (2-5A) from ATP which then bind to the inactive monomeric form of ribonuclease L (RNase L) leading to its dimerization and subsequent activation. Activation of RNase L leads to degradation of cellular as well as viral RNA, resulting in the inhibition of protein synthesis, thus terminating viral replication. Can mediate the antiviral effect via the classical RNase L-dependent pathway or an alternative antiviral pathway independent of RNase L. Displays antiviral activity against Chikungunya virus (CHIKV), Dengue virus, Sindbis virus (SINV) and Semliki forest virus (SFV).</text>
</comment>
<comment type="catalytic activity">
    <reaction evidence="7 8">
        <text>3 ATP = 5'-triphosphoadenylyl-(2'-&gt;5')-adenylyl-(2'-&gt;5')-adenosine + 2 diphosphate</text>
        <dbReference type="Rhea" id="RHEA:34407"/>
        <dbReference type="ChEBI" id="CHEBI:30616"/>
        <dbReference type="ChEBI" id="CHEBI:33019"/>
        <dbReference type="ChEBI" id="CHEBI:67143"/>
        <dbReference type="EC" id="2.7.7.84"/>
    </reaction>
</comment>
<comment type="cofactor">
    <cofactor evidence="12">
        <name>Mg(2+)</name>
        <dbReference type="ChEBI" id="CHEBI:18420"/>
    </cofactor>
</comment>
<comment type="activity regulation">
    <text evidence="7 10">Produced as a latent enzyme which is activated by dsRNA generated during the course of viral infection (Probable). Strongly activated by long dsRNAs at least 50 nucleotides in length (PubMed:25775560). ssRNA does not activate the enzyme (PubMed:25775560).</text>
</comment>
<comment type="subunit">
    <text evidence="7">Monomer.</text>
</comment>
<comment type="interaction">
    <interactant intactId="EBI-6115729">
        <id>Q9Y6K5</id>
    </interactant>
    <interactant intactId="EBI-1211456">
        <id>Q7L2E3</id>
        <label>DHX30</label>
    </interactant>
    <organismsDiffer>false</organismsDiffer>
    <experiments>2</experiments>
</comment>
<comment type="interaction">
    <interactant intactId="EBI-6115729">
        <id>Q9Y6K5</id>
    </interactant>
    <interactant intactId="EBI-372243">
        <id>P56537</id>
        <label>EIF6</label>
    </interactant>
    <organismsDiffer>false</organismsDiffer>
    <experiments>2</experiments>
</comment>
<comment type="interaction">
    <interactant intactId="EBI-6115729">
        <id>Q9Y6K5</id>
    </interactant>
    <interactant intactId="EBI-744088">
        <id>Q8IY81</id>
        <label>FTSJ3</label>
    </interactant>
    <organismsDiffer>false</organismsDiffer>
    <experiments>2</experiments>
</comment>
<comment type="interaction">
    <interactant intactId="EBI-6115729">
        <id>Q9Y6K5</id>
    </interactant>
    <interactant intactId="EBI-2512448">
        <id>Q12894</id>
        <label>IFRD2</label>
    </interactant>
    <organismsDiffer>false</organismsDiffer>
    <experiments>2</experiments>
</comment>
<comment type="interaction">
    <interactant intactId="EBI-6115729">
        <id>Q9Y6K5</id>
    </interactant>
    <interactant intactId="EBI-995373">
        <id>Q7Z434</id>
        <label>MAVS</label>
    </interactant>
    <organismsDiffer>false</organismsDiffer>
    <experiments>2</experiments>
</comment>
<comment type="subcellular location">
    <subcellularLocation>
        <location>Cytoplasm</location>
    </subcellularLocation>
    <subcellularLocation>
        <location>Nucleus</location>
    </subcellularLocation>
</comment>
<comment type="tissue specificity">
    <text>Present at high level in placenta trophoblast.</text>
</comment>
<comment type="induction">
    <text>By type I interferon (IFN) and viruses.</text>
</comment>
<comment type="domain">
    <text evidence="7">OAS domain 3 is catalytically active. OAS domain 1 has no catalytic activity but is essential for recognition of long dsRNAs.</text>
</comment>
<comment type="similarity">
    <text evidence="10">Belongs to the 2-5A synthase family.</text>
</comment>
<comment type="sequence caution" evidence="10">
    <conflict type="frameshift">
        <sequence resource="EMBL-CDS" id="AAD28543"/>
    </conflict>
</comment>
<dbReference type="EC" id="2.7.7.84" evidence="7 8"/>
<dbReference type="EMBL" id="AF063613">
    <property type="protein sequence ID" value="AAD28543.1"/>
    <property type="status" value="ALT_FRAME"/>
    <property type="molecule type" value="mRNA"/>
</dbReference>
<dbReference type="EMBL" id="AB044545">
    <property type="protein sequence ID" value="BAB18647.1"/>
    <property type="molecule type" value="mRNA"/>
</dbReference>
<dbReference type="EMBL" id="AC004551">
    <property type="status" value="NOT_ANNOTATED_CDS"/>
    <property type="molecule type" value="Genomic_DNA"/>
</dbReference>
<dbReference type="EMBL" id="BC113746">
    <property type="protein sequence ID" value="AAI13747.1"/>
    <property type="molecule type" value="mRNA"/>
</dbReference>
<dbReference type="EMBL" id="AF251351">
    <property type="status" value="NOT_ANNOTATED_CDS"/>
    <property type="molecule type" value="Genomic_DNA"/>
</dbReference>
<dbReference type="CCDS" id="CCDS44981.1"/>
<dbReference type="RefSeq" id="NP_006178.2">
    <property type="nucleotide sequence ID" value="NM_006187.3"/>
</dbReference>
<dbReference type="PDB" id="4S3N">
    <property type="method" value="X-ray"/>
    <property type="resolution" value="2.00 A"/>
    <property type="chains" value="A=1-371"/>
</dbReference>
<dbReference type="PDBsum" id="4S3N"/>
<dbReference type="SMR" id="Q9Y6K5"/>
<dbReference type="BioGRID" id="110994">
    <property type="interactions" value="70"/>
</dbReference>
<dbReference type="FunCoup" id="Q9Y6K5">
    <property type="interactions" value="529"/>
</dbReference>
<dbReference type="IntAct" id="Q9Y6K5">
    <property type="interactions" value="44"/>
</dbReference>
<dbReference type="MINT" id="Q9Y6K5"/>
<dbReference type="STRING" id="9606.ENSP00000228928"/>
<dbReference type="GlyGen" id="Q9Y6K5">
    <property type="glycosylation" value="2 sites, 1 O-linked glycan (1 site)"/>
</dbReference>
<dbReference type="iPTMnet" id="Q9Y6K5"/>
<dbReference type="PhosphoSitePlus" id="Q9Y6K5"/>
<dbReference type="SwissPalm" id="Q9Y6K5"/>
<dbReference type="BioMuta" id="OAS3"/>
<dbReference type="DMDM" id="317373408"/>
<dbReference type="jPOST" id="Q9Y6K5"/>
<dbReference type="MassIVE" id="Q9Y6K5"/>
<dbReference type="PaxDb" id="9606-ENSP00000228928"/>
<dbReference type="PeptideAtlas" id="Q9Y6K5"/>
<dbReference type="ProteomicsDB" id="86712"/>
<dbReference type="Pumba" id="Q9Y6K5"/>
<dbReference type="Antibodypedia" id="31208">
    <property type="antibodies" value="192 antibodies from 32 providers"/>
</dbReference>
<dbReference type="DNASU" id="4940"/>
<dbReference type="Ensembl" id="ENST00000228928.12">
    <property type="protein sequence ID" value="ENSP00000228928.7"/>
    <property type="gene ID" value="ENSG00000111331.14"/>
</dbReference>
<dbReference type="GeneID" id="4940"/>
<dbReference type="KEGG" id="hsa:4940"/>
<dbReference type="MANE-Select" id="ENST00000228928.12">
    <property type="protein sequence ID" value="ENSP00000228928.7"/>
    <property type="RefSeq nucleotide sequence ID" value="NM_006187.4"/>
    <property type="RefSeq protein sequence ID" value="NP_006178.2"/>
</dbReference>
<dbReference type="UCSC" id="uc001tug.4">
    <property type="organism name" value="human"/>
</dbReference>
<dbReference type="AGR" id="HGNC:8088"/>
<dbReference type="CTD" id="4940"/>
<dbReference type="DisGeNET" id="4940"/>
<dbReference type="GeneCards" id="OAS3"/>
<dbReference type="HGNC" id="HGNC:8088">
    <property type="gene designation" value="OAS3"/>
</dbReference>
<dbReference type="HPA" id="ENSG00000111331">
    <property type="expression patterns" value="Low tissue specificity"/>
</dbReference>
<dbReference type="MIM" id="603351">
    <property type="type" value="gene"/>
</dbReference>
<dbReference type="neXtProt" id="NX_Q9Y6K5"/>
<dbReference type="OpenTargets" id="ENSG00000111331"/>
<dbReference type="PharmGKB" id="PA31877"/>
<dbReference type="VEuPathDB" id="HostDB:ENSG00000111331"/>
<dbReference type="eggNOG" id="ENOG502S649">
    <property type="taxonomic scope" value="Eukaryota"/>
</dbReference>
<dbReference type="GeneTree" id="ENSGT00510000046406"/>
<dbReference type="HOGENOM" id="CLU_287245_0_0_1"/>
<dbReference type="InParanoid" id="Q9Y6K5"/>
<dbReference type="OMA" id="WYRQCNK"/>
<dbReference type="OrthoDB" id="1885901at2759"/>
<dbReference type="PAN-GO" id="Q9Y6K5">
    <property type="GO annotations" value="8 GO annotations based on evolutionary models"/>
</dbReference>
<dbReference type="PhylomeDB" id="Q9Y6K5"/>
<dbReference type="TreeFam" id="TF329749"/>
<dbReference type="BioCyc" id="MetaCyc:ENSG00000111331-MONOMER"/>
<dbReference type="BRENDA" id="2.7.7.84">
    <property type="organism ID" value="2681"/>
</dbReference>
<dbReference type="PathwayCommons" id="Q9Y6K5"/>
<dbReference type="Reactome" id="R-HSA-877300">
    <property type="pathway name" value="Interferon gamma signaling"/>
</dbReference>
<dbReference type="Reactome" id="R-HSA-8983711">
    <property type="pathway name" value="OAS antiviral response"/>
</dbReference>
<dbReference type="Reactome" id="R-HSA-909733">
    <property type="pathway name" value="Interferon alpha/beta signaling"/>
</dbReference>
<dbReference type="SignaLink" id="Q9Y6K5"/>
<dbReference type="BioGRID-ORCS" id="4940">
    <property type="hits" value="8 hits in 1170 CRISPR screens"/>
</dbReference>
<dbReference type="CD-CODE" id="DEE660B4">
    <property type="entry name" value="Stress granule"/>
</dbReference>
<dbReference type="ChiTaRS" id="OAS3">
    <property type="organism name" value="human"/>
</dbReference>
<dbReference type="EvolutionaryTrace" id="Q9Y6K5"/>
<dbReference type="GeneWiki" id="OAS3"/>
<dbReference type="GenomeRNAi" id="4940"/>
<dbReference type="Pharos" id="Q9Y6K5">
    <property type="development level" value="Tbio"/>
</dbReference>
<dbReference type="PRO" id="PR:Q9Y6K5"/>
<dbReference type="Proteomes" id="UP000005640">
    <property type="component" value="Chromosome 12"/>
</dbReference>
<dbReference type="RNAct" id="Q9Y6K5">
    <property type="molecule type" value="protein"/>
</dbReference>
<dbReference type="Bgee" id="ENSG00000111331">
    <property type="expression patterns" value="Expressed in monocyte and 157 other cell types or tissues"/>
</dbReference>
<dbReference type="ExpressionAtlas" id="Q9Y6K5">
    <property type="expression patterns" value="baseline and differential"/>
</dbReference>
<dbReference type="GO" id="GO:0005737">
    <property type="term" value="C:cytoplasm"/>
    <property type="evidence" value="ECO:0000314"/>
    <property type="project" value="UniProtKB"/>
</dbReference>
<dbReference type="GO" id="GO:0005829">
    <property type="term" value="C:cytosol"/>
    <property type="evidence" value="ECO:0000314"/>
    <property type="project" value="HPA"/>
</dbReference>
<dbReference type="GO" id="GO:0005615">
    <property type="term" value="C:extracellular space"/>
    <property type="evidence" value="ECO:0007005"/>
    <property type="project" value="UniProtKB"/>
</dbReference>
<dbReference type="GO" id="GO:0043231">
    <property type="term" value="C:intracellular membrane-bounded organelle"/>
    <property type="evidence" value="ECO:0000304"/>
    <property type="project" value="ProtInc"/>
</dbReference>
<dbReference type="GO" id="GO:0016020">
    <property type="term" value="C:membrane"/>
    <property type="evidence" value="ECO:0000318"/>
    <property type="project" value="GO_Central"/>
</dbReference>
<dbReference type="GO" id="GO:0005654">
    <property type="term" value="C:nucleoplasm"/>
    <property type="evidence" value="ECO:0000314"/>
    <property type="project" value="HPA"/>
</dbReference>
<dbReference type="GO" id="GO:0005886">
    <property type="term" value="C:plasma membrane"/>
    <property type="evidence" value="ECO:0000314"/>
    <property type="project" value="HPA"/>
</dbReference>
<dbReference type="GO" id="GO:0001730">
    <property type="term" value="F:2'-5'-oligoadenylate synthetase activity"/>
    <property type="evidence" value="ECO:0000314"/>
    <property type="project" value="UniProtKB"/>
</dbReference>
<dbReference type="GO" id="GO:0005524">
    <property type="term" value="F:ATP binding"/>
    <property type="evidence" value="ECO:0000314"/>
    <property type="project" value="UniProtKB"/>
</dbReference>
<dbReference type="GO" id="GO:0003725">
    <property type="term" value="F:double-stranded RNA binding"/>
    <property type="evidence" value="ECO:0000314"/>
    <property type="project" value="UniProtKB"/>
</dbReference>
<dbReference type="GO" id="GO:0046872">
    <property type="term" value="F:metal ion binding"/>
    <property type="evidence" value="ECO:0007669"/>
    <property type="project" value="UniProtKB-KW"/>
</dbReference>
<dbReference type="GO" id="GO:0140374">
    <property type="term" value="P:antiviral innate immune response"/>
    <property type="evidence" value="ECO:0000318"/>
    <property type="project" value="GO_Central"/>
</dbReference>
<dbReference type="GO" id="GO:0071360">
    <property type="term" value="P:cellular response to exogenous dsRNA"/>
    <property type="evidence" value="ECO:0000314"/>
    <property type="project" value="ARUK-UCL"/>
</dbReference>
<dbReference type="GO" id="GO:0042742">
    <property type="term" value="P:defense response to bacterium"/>
    <property type="evidence" value="ECO:0000315"/>
    <property type="project" value="ARUK-UCL"/>
</dbReference>
<dbReference type="GO" id="GO:0051607">
    <property type="term" value="P:defense response to virus"/>
    <property type="evidence" value="ECO:0000314"/>
    <property type="project" value="UniProtKB"/>
</dbReference>
<dbReference type="GO" id="GO:0070106">
    <property type="term" value="P:interleukin-27-mediated signaling pathway"/>
    <property type="evidence" value="ECO:0000318"/>
    <property type="project" value="GO_Central"/>
</dbReference>
<dbReference type="GO" id="GO:0039530">
    <property type="term" value="P:MDA-5 signaling pathway"/>
    <property type="evidence" value="ECO:0000315"/>
    <property type="project" value="ARUK-UCL"/>
</dbReference>
<dbReference type="GO" id="GO:0071650">
    <property type="term" value="P:negative regulation of chemokine (C-C motif) ligand 5 production"/>
    <property type="evidence" value="ECO:0000315"/>
    <property type="project" value="ARUK-UCL"/>
</dbReference>
<dbReference type="GO" id="GO:2000342">
    <property type="term" value="P:negative regulation of chemokine (C-X-C motif) ligand 2 production"/>
    <property type="evidence" value="ECO:0000315"/>
    <property type="project" value="ARUK-UCL"/>
</dbReference>
<dbReference type="GO" id="GO:0035395">
    <property type="term" value="P:negative regulation of chemokine (C-X-C motif) ligand 9 production"/>
    <property type="evidence" value="ECO:0000315"/>
    <property type="project" value="ARUK-UCL"/>
</dbReference>
<dbReference type="GO" id="GO:0071659">
    <property type="term" value="P:negative regulation of IP-10 production"/>
    <property type="evidence" value="ECO:0000315"/>
    <property type="project" value="ARUK-UCL"/>
</dbReference>
<dbReference type="GO" id="GO:0060339">
    <property type="term" value="P:negative regulation of type I interferon-mediated signaling pathway"/>
    <property type="evidence" value="ECO:0000315"/>
    <property type="project" value="ARUK-UCL"/>
</dbReference>
<dbReference type="GO" id="GO:0045071">
    <property type="term" value="P:negative regulation of viral genome replication"/>
    <property type="evidence" value="ECO:0000314"/>
    <property type="project" value="UniProtKB"/>
</dbReference>
<dbReference type="GO" id="GO:0006139">
    <property type="term" value="P:nucleobase-containing compound metabolic process"/>
    <property type="evidence" value="ECO:0000304"/>
    <property type="project" value="ProtInc"/>
</dbReference>
<dbReference type="GO" id="GO:0032728">
    <property type="term" value="P:positive regulation of interferon-beta production"/>
    <property type="evidence" value="ECO:0000315"/>
    <property type="project" value="ARUK-UCL"/>
</dbReference>
<dbReference type="GO" id="GO:0071639">
    <property type="term" value="P:positive regulation of monocyte chemotactic protein-1 production"/>
    <property type="evidence" value="ECO:0000315"/>
    <property type="project" value="ARUK-UCL"/>
</dbReference>
<dbReference type="GO" id="GO:0032760">
    <property type="term" value="P:positive regulation of tumor necrosis factor production"/>
    <property type="evidence" value="ECO:0000315"/>
    <property type="project" value="ARUK-UCL"/>
</dbReference>
<dbReference type="GO" id="GO:0060700">
    <property type="term" value="P:regulation of ribonuclease activity"/>
    <property type="evidence" value="ECO:0000314"/>
    <property type="project" value="UniProtKB"/>
</dbReference>
<dbReference type="GO" id="GO:0009615">
    <property type="term" value="P:response to virus"/>
    <property type="evidence" value="ECO:0000314"/>
    <property type="project" value="UniProtKB"/>
</dbReference>
<dbReference type="GO" id="GO:0039529">
    <property type="term" value="P:RIG-I signaling pathway"/>
    <property type="evidence" value="ECO:0000315"/>
    <property type="project" value="ARUK-UCL"/>
</dbReference>
<dbReference type="GO" id="GO:0060337">
    <property type="term" value="P:type I interferon-mediated signaling pathway"/>
    <property type="evidence" value="ECO:0000318"/>
    <property type="project" value="GO_Central"/>
</dbReference>
<dbReference type="CDD" id="cd05400">
    <property type="entry name" value="NT_2-5OAS_ClassI-CCAase"/>
    <property type="match status" value="3"/>
</dbReference>
<dbReference type="FunFam" id="1.10.1410.20:FF:000001">
    <property type="entry name" value="2'-5'-oligoadenylate synthetase 1"/>
    <property type="match status" value="1"/>
</dbReference>
<dbReference type="FunFam" id="3.30.460.10:FF:000007">
    <property type="entry name" value="2'-5'-oligoadenylate synthetase 1"/>
    <property type="match status" value="3"/>
</dbReference>
<dbReference type="FunFam" id="1.10.1410.20:FF:000002">
    <property type="entry name" value="2'-5'-oligoadenylate synthetase 3"/>
    <property type="match status" value="2"/>
</dbReference>
<dbReference type="Gene3D" id="1.10.1410.20">
    <property type="entry name" value="2'-5'-oligoadenylate synthetase 1, domain 2"/>
    <property type="match status" value="3"/>
</dbReference>
<dbReference type="Gene3D" id="3.30.460.10">
    <property type="entry name" value="Beta Polymerase, domain 2"/>
    <property type="match status" value="3"/>
</dbReference>
<dbReference type="InterPro" id="IPR018952">
    <property type="entry name" value="2-5-oligoAdlate_synth_1_dom2/C"/>
</dbReference>
<dbReference type="InterPro" id="IPR006117">
    <property type="entry name" value="2-5OAS_C_CS"/>
</dbReference>
<dbReference type="InterPro" id="IPR043518">
    <property type="entry name" value="2-5OAS_N_CS"/>
</dbReference>
<dbReference type="InterPro" id="IPR006116">
    <property type="entry name" value="NT_2-5OAS_ClassI-CCAase"/>
</dbReference>
<dbReference type="InterPro" id="IPR043519">
    <property type="entry name" value="NT_sf"/>
</dbReference>
<dbReference type="InterPro" id="IPR002934">
    <property type="entry name" value="Polymerase_NTP_transf_dom"/>
</dbReference>
<dbReference type="PANTHER" id="PTHR11258:SF7">
    <property type="entry name" value="2'-5'-OLIGOADENYLATE SYNTHASE-LIKE PROTEIN 2"/>
    <property type="match status" value="1"/>
</dbReference>
<dbReference type="PANTHER" id="PTHR11258">
    <property type="entry name" value="2-5 OLIGOADENYLATE SYNTHETASE"/>
    <property type="match status" value="1"/>
</dbReference>
<dbReference type="Pfam" id="PF01909">
    <property type="entry name" value="NTP_transf_2"/>
    <property type="match status" value="1"/>
</dbReference>
<dbReference type="Pfam" id="PF10421">
    <property type="entry name" value="OAS1_C"/>
    <property type="match status" value="3"/>
</dbReference>
<dbReference type="SUPFAM" id="SSF81301">
    <property type="entry name" value="Nucleotidyltransferase"/>
    <property type="match status" value="3"/>
</dbReference>
<dbReference type="SUPFAM" id="SSF81631">
    <property type="entry name" value="PAP/OAS1 substrate-binding domain"/>
    <property type="match status" value="3"/>
</dbReference>
<dbReference type="PROSITE" id="PS00832">
    <property type="entry name" value="25A_SYNTH_1"/>
    <property type="match status" value="3"/>
</dbReference>
<dbReference type="PROSITE" id="PS00833">
    <property type="entry name" value="25A_SYNTH_2"/>
    <property type="match status" value="2"/>
</dbReference>
<dbReference type="PROSITE" id="PS50152">
    <property type="entry name" value="25A_SYNTH_3"/>
    <property type="match status" value="3"/>
</dbReference>
<organism>
    <name type="scientific">Homo sapiens</name>
    <name type="common">Human</name>
    <dbReference type="NCBI Taxonomy" id="9606"/>
    <lineage>
        <taxon>Eukaryota</taxon>
        <taxon>Metazoa</taxon>
        <taxon>Chordata</taxon>
        <taxon>Craniata</taxon>
        <taxon>Vertebrata</taxon>
        <taxon>Euteleostomi</taxon>
        <taxon>Mammalia</taxon>
        <taxon>Eutheria</taxon>
        <taxon>Euarchontoglires</taxon>
        <taxon>Primates</taxon>
        <taxon>Haplorrhini</taxon>
        <taxon>Catarrhini</taxon>
        <taxon>Hominidae</taxon>
        <taxon>Homo</taxon>
    </lineage>
</organism>
<gene>
    <name type="primary">OAS3</name>
    <name type="ORF">P/OKcl.4</name>
</gene>
<name>OAS3_HUMAN</name>
<evidence type="ECO:0000250" key="1">
    <source>
        <dbReference type="UniProtKB" id="P00973"/>
    </source>
</evidence>
<evidence type="ECO:0000250" key="2">
    <source>
        <dbReference type="UniProtKB" id="P29728"/>
    </source>
</evidence>
<evidence type="ECO:0000269" key="3">
    <source>
    </source>
</evidence>
<evidence type="ECO:0000269" key="4">
    <source>
    </source>
</evidence>
<evidence type="ECO:0000269" key="5">
    <source>
    </source>
</evidence>
<evidence type="ECO:0000269" key="6">
    <source>
    </source>
</evidence>
<evidence type="ECO:0000269" key="7">
    <source>
    </source>
</evidence>
<evidence type="ECO:0000269" key="8">
    <source>
    </source>
</evidence>
<evidence type="ECO:0000269" key="9">
    <source ref="6"/>
</evidence>
<evidence type="ECO:0000305" key="10"/>
<evidence type="ECO:0000305" key="11">
    <source>
    </source>
</evidence>
<evidence type="ECO:0000305" key="12">
    <source>
    </source>
</evidence>
<evidence type="ECO:0007744" key="13">
    <source>
    </source>
</evidence>
<evidence type="ECO:0007744" key="14">
    <source>
    </source>
</evidence>
<evidence type="ECO:0007829" key="15">
    <source>
        <dbReference type="PDB" id="4S3N"/>
    </source>
</evidence>
<feature type="chain" id="PRO_0000160265" description="2'-5'-oligoadenylate synthase 3">
    <location>
        <begin position="1"/>
        <end position="1087"/>
    </location>
</feature>
<feature type="region of interest" description="OAS domain 1" evidence="10">
    <location>
        <begin position="6"/>
        <end position="343"/>
    </location>
</feature>
<feature type="region of interest" description="Interaction with dsRNA" evidence="7">
    <location>
        <begin position="12"/>
        <end position="57"/>
    </location>
</feature>
<feature type="region of interest" description="Interaction with dsRNA" evidence="7">
    <location>
        <begin position="186"/>
        <end position="200"/>
    </location>
</feature>
<feature type="region of interest" description="Linker" evidence="10">
    <location>
        <begin position="344"/>
        <end position="410"/>
    </location>
</feature>
<feature type="region of interest" description="OAS domain 2" evidence="10">
    <location>
        <begin position="411"/>
        <end position="742"/>
    </location>
</feature>
<feature type="region of interest" description="OAS domain 3" evidence="10">
    <location>
        <begin position="750"/>
        <end position="1084"/>
    </location>
</feature>
<feature type="binding site" evidence="1">
    <location>
        <position position="804"/>
    </location>
    <ligand>
        <name>ATP</name>
        <dbReference type="ChEBI" id="CHEBI:30616"/>
    </ligand>
</feature>
<feature type="binding site" evidence="11">
    <location>
        <position position="816"/>
    </location>
    <ligand>
        <name>Mg(2+)</name>
        <dbReference type="ChEBI" id="CHEBI:18420"/>
        <note>catalytic</note>
    </ligand>
</feature>
<feature type="binding site" evidence="11">
    <location>
        <position position="818"/>
    </location>
    <ligand>
        <name>Mg(2+)</name>
        <dbReference type="ChEBI" id="CHEBI:18420"/>
        <note>catalytic</note>
    </ligand>
</feature>
<feature type="binding site" evidence="1">
    <location>
        <position position="888"/>
    </location>
    <ligand>
        <name>Mg(2+)</name>
        <dbReference type="ChEBI" id="CHEBI:18420"/>
        <note>catalytic</note>
    </ligand>
</feature>
<feature type="binding site" evidence="2">
    <location>
        <position position="947"/>
    </location>
    <ligand>
        <name>ATP</name>
        <dbReference type="ChEBI" id="CHEBI:30616"/>
    </ligand>
</feature>
<feature type="binding site" evidence="1">
    <location>
        <position position="950"/>
    </location>
    <ligand>
        <name>ATP</name>
        <dbReference type="ChEBI" id="CHEBI:30616"/>
    </ligand>
</feature>
<feature type="binding site" evidence="1">
    <location>
        <position position="969"/>
    </location>
    <ligand>
        <name>ATP</name>
        <dbReference type="ChEBI" id="CHEBI:30616"/>
    </ligand>
</feature>
<feature type="site" description="Interaction with dsRNA" evidence="7">
    <location>
        <position position="155"/>
    </location>
</feature>
<feature type="site" description="Interaction with dsRNA" evidence="7">
    <location>
        <position position="244"/>
    </location>
</feature>
<feature type="modified residue" description="N-acetylmethionine" evidence="9 13">
    <location>
        <position position="1"/>
    </location>
</feature>
<feature type="modified residue" description="Phosphothreonine" evidence="14">
    <location>
        <position position="365"/>
    </location>
</feature>
<feature type="sequence variant" id="VAR_060076" description="In dbSNP:rs1859330." evidence="3">
    <original>R</original>
    <variation>K</variation>
    <location>
        <position position="18"/>
    </location>
</feature>
<feature type="sequence variant" id="VAR_060077" description="In dbSNP:rs1859330.">
    <original>R</original>
    <variation>M</variation>
    <location>
        <position position="18"/>
    </location>
</feature>
<feature type="sequence variant" id="VAR_060078" description="In dbSNP:rs1859330.">
    <original>R</original>
    <variation>T</variation>
    <location>
        <position position="18"/>
    </location>
</feature>
<feature type="sequence variant" id="VAR_057660" description="In dbSNP:rs12819767.">
    <original>R</original>
    <variation>W</variation>
    <location>
        <position position="65"/>
    </location>
</feature>
<feature type="sequence variant" id="VAR_062127" description="In dbSNP:rs45519442.">
    <original>R</original>
    <variation>K</variation>
    <location>
        <position position="378"/>
    </location>
</feature>
<feature type="sequence variant" id="VAR_057661" description="In dbSNP:rs2285933." evidence="4">
    <original>S</original>
    <variation>R</variation>
    <location>
        <position position="381"/>
    </location>
</feature>
<feature type="sequence variant" id="VAR_057662" description="In dbSNP:rs16942374.">
    <original>R</original>
    <variation>H</variation>
    <location>
        <position position="869"/>
    </location>
</feature>
<feature type="mutagenesis site" description="Impaired dsRNA binding." evidence="7">
    <original>R</original>
    <variation>A</variation>
    <location>
        <position position="30"/>
    </location>
</feature>
<feature type="mutagenesis site" description="Impaired dsRNA binding." evidence="7">
    <original>R</original>
    <variation>A</variation>
    <location>
        <position position="41"/>
    </location>
</feature>
<feature type="mutagenesis site" description="No effect on catalytic activity; when associated with D-145." evidence="7">
    <original>E</original>
    <variation>D</variation>
    <location>
        <position position="76"/>
    </location>
</feature>
<feature type="mutagenesis site" description="No effect on catalytic activity. No effect on catalytic activity; when associated with D-76." evidence="7">
    <original>S</original>
    <variation>D</variation>
    <location>
        <position position="145"/>
    </location>
</feature>
<feature type="mutagenesis site" description="Abolishes catalytic activity." evidence="7">
    <original>DAD</original>
    <variation>AAA</variation>
    <location>
        <begin position="816"/>
        <end position="818"/>
    </location>
</feature>
<feature type="sequence conflict" description="In Ref. 1; AAD28543." evidence="10" ref="1">
    <original>G</original>
    <variation>A</variation>
    <location>
        <position position="159"/>
    </location>
</feature>
<feature type="sequence conflict" description="In Ref. 1; AAD28543." evidence="10" ref="1">
    <original>A</original>
    <variation>G</variation>
    <location>
        <position position="249"/>
    </location>
</feature>
<feature type="sequence conflict" description="In Ref. 1; AAD28543." evidence="10" ref="1">
    <original>QL</original>
    <variation>HV</variation>
    <location>
        <begin position="287"/>
        <end position="288"/>
    </location>
</feature>
<feature type="sequence conflict" description="In Ref. 1; AAD28543." evidence="10" ref="1">
    <original>L</original>
    <variation>H</variation>
    <location>
        <position position="316"/>
    </location>
</feature>
<feature type="sequence conflict" description="In Ref. 1; AAD28543." evidence="10" ref="1">
    <original>G</original>
    <variation>A</variation>
    <location>
        <position position="393"/>
    </location>
</feature>
<feature type="sequence conflict" description="In Ref. 1; AAD28543 and 2; BAB18647." evidence="10" ref="1 2">
    <original>QL</original>
    <variation>HV</variation>
    <location>
        <begin position="503"/>
        <end position="504"/>
    </location>
</feature>
<feature type="sequence conflict" description="In Ref. 2; BAB18647." evidence="10" ref="2">
    <original>G</original>
    <variation>R</variation>
    <location>
        <position position="984"/>
    </location>
</feature>
<feature type="helix" evidence="15">
    <location>
        <begin position="2"/>
        <end position="5"/>
    </location>
</feature>
<feature type="helix" evidence="15">
    <location>
        <begin position="8"/>
        <end position="10"/>
    </location>
</feature>
<feature type="helix" evidence="15">
    <location>
        <begin position="11"/>
        <end position="18"/>
    </location>
</feature>
<feature type="helix" evidence="15">
    <location>
        <begin position="23"/>
        <end position="41"/>
    </location>
</feature>
<feature type="strand" evidence="15">
    <location>
        <begin position="54"/>
        <end position="60"/>
    </location>
</feature>
<feature type="helix" evidence="15">
    <location>
        <begin position="61"/>
        <end position="65"/>
    </location>
</feature>
<feature type="strand" evidence="15">
    <location>
        <begin position="73"/>
        <end position="81"/>
    </location>
</feature>
<feature type="helix" evidence="15">
    <location>
        <begin position="89"/>
        <end position="92"/>
    </location>
</feature>
<feature type="helix" evidence="15">
    <location>
        <begin position="95"/>
        <end position="108"/>
    </location>
</feature>
<feature type="strand" evidence="15">
    <location>
        <begin position="116"/>
        <end position="119"/>
    </location>
</feature>
<feature type="strand" evidence="15">
    <location>
        <begin position="129"/>
        <end position="139"/>
    </location>
</feature>
<feature type="strand" evidence="15">
    <location>
        <begin position="141"/>
        <end position="149"/>
    </location>
</feature>
<feature type="helix" evidence="15">
    <location>
        <begin position="165"/>
        <end position="172"/>
    </location>
</feature>
<feature type="turn" evidence="15">
    <location>
        <begin position="177"/>
        <end position="180"/>
    </location>
</feature>
<feature type="helix" evidence="15">
    <location>
        <begin position="181"/>
        <end position="184"/>
    </location>
</feature>
<feature type="helix" evidence="15">
    <location>
        <begin position="185"/>
        <end position="193"/>
    </location>
</feature>
<feature type="helix" evidence="15">
    <location>
        <begin position="197"/>
        <end position="215"/>
    </location>
</feature>
<feature type="helix" evidence="15">
    <location>
        <begin position="226"/>
        <end position="240"/>
    </location>
</feature>
<feature type="helix" evidence="15">
    <location>
        <begin position="248"/>
        <end position="260"/>
    </location>
</feature>
<feature type="helix" evidence="15">
    <location>
        <begin position="262"/>
        <end position="264"/>
    </location>
</feature>
<feature type="strand" evidence="15">
    <location>
        <begin position="275"/>
        <end position="277"/>
    </location>
</feature>
<feature type="helix" evidence="15">
    <location>
        <begin position="278"/>
        <end position="288"/>
    </location>
</feature>
<feature type="strand" evidence="15">
    <location>
        <begin position="290"/>
        <end position="292"/>
    </location>
</feature>
<feature type="strand" evidence="15">
    <location>
        <begin position="294"/>
        <end position="296"/>
    </location>
</feature>
<feature type="strand" evidence="15">
    <location>
        <begin position="304"/>
        <end position="306"/>
    </location>
</feature>
<feature type="helix" evidence="15">
    <location>
        <begin position="313"/>
        <end position="322"/>
    </location>
</feature>
<feature type="helix" evidence="15">
    <location>
        <begin position="327"/>
        <end position="329"/>
    </location>
</feature>
<feature type="turn" evidence="15">
    <location>
        <begin position="332"/>
        <end position="334"/>
    </location>
</feature>
<sequence>MDLYSTPAAALDRFVARRLQPRKEFVEKARRALGALAAALRERGGRLGAAAPRVLKTVKGGSSGRGTALKGGCDSELVIFLDCFKSYVDQRARRAEILSEMRASLESWWQNPVPGLRLTFPEQSVPGALQFRLTSVDLEDWMDVSLVPAFNVLGQAGSGVKPKPQVYSTLLNSGCQGGEHAACFTELRRNFVNIRPAKLKNLILLVKHWYHQVCLQGLWKETLPPVYALELLTIFAWEQGCKKDAFSLAEGLRTVLGLIQQHQHLCVFWTVNYGFEDPAVGQFLQRQLKRPRPVILDPADPTWDLGNGAAWHWDLLAQEAASCYDHPCFLRGMGDPVQSWKGPGLPRAGCSGLGHPIQLDPNQKTPENSKSLNAVYPRAGSKPPSCPAPGPTGAASIVPSVPGMALDLSQIPTKELDRFIQDHLKPSPQFQEQVKKAIDIILRCLHENCVHKASRVSKGGSFGRGTDLRDGCDVELIIFLNCFTDYKDQGPRRAEILDEMRAQLESWWQDQVPSLSLQFPEQNVPEALQFQLVSTALKSWTDVSLLPAFDAVGQLSSGTKPNPQVYSRLLTSGCQEGEHKACFAELRRNFMNIRPVKLKNLILLVKHWYRQVAAQNKGKGPAPASLPPAYALELLTIFAWEQGCRQDCFNMAQGFRTVLGLVQQHQQLCVYWTVNYSTEDPAMRMHLLGQLRKPRPLVLDPADPTWNVGHGSWELLAQEAAALGMQACFLSRDGTSVQPWDVMPALLYQTPAGDLDKFISEFLQPNRQFLAQVNKAVDTICSFLKENCFRNSPIKVIKVVKGGSSAKGTALRGRSDADLVVFLSCFSQFTEQGNKRAEIISEIRAQLEACQQERQFEVKFEVSKWENPRVLSFSLTSQTMLDQSVDFDVLPAFDALGQLVSGSRPSSQVYVDLIHSYSNAGEYSTCFTELQRDFIISRPTKLKSLIRLVKHWYQQCTKISKGRGSLPPQHGLELLTVYAWEQGGKDSQFNMAEGFRTVLELVTQYRQLCIYWTINYNAKDKTVGDFLKQQLQKPRPIILDPADPTGNLGHNARWDLLAKEAAACTSALCCMGRNGIPIQPWPVKAAV</sequence>
<keyword id="KW-0002">3D-structure</keyword>
<keyword id="KW-0007">Acetylation</keyword>
<keyword id="KW-0051">Antiviral defense</keyword>
<keyword id="KW-0067">ATP-binding</keyword>
<keyword id="KW-0963">Cytoplasm</keyword>
<keyword id="KW-0903">Direct protein sequencing</keyword>
<keyword id="KW-0391">Immunity</keyword>
<keyword id="KW-0399">Innate immunity</keyword>
<keyword id="KW-0460">Magnesium</keyword>
<keyword id="KW-0479">Metal-binding</keyword>
<keyword id="KW-0547">Nucleotide-binding</keyword>
<keyword id="KW-0548">Nucleotidyltransferase</keyword>
<keyword id="KW-0539">Nucleus</keyword>
<keyword id="KW-0597">Phosphoprotein</keyword>
<keyword id="KW-1267">Proteomics identification</keyword>
<keyword id="KW-1185">Reference proteome</keyword>
<keyword id="KW-0677">Repeat</keyword>
<keyword id="KW-0694">RNA-binding</keyword>
<keyword id="KW-0808">Transferase</keyword>
<proteinExistence type="evidence at protein level"/>
<accession>Q9Y6K5</accession>
<accession>Q2HJ14</accession>
<accession>Q9H3P5</accession>